<gene>
    <name type="primary">Dmtn</name>
    <name type="synonym">Epb4.9</name>
    <name type="synonym">Epb49</name>
</gene>
<dbReference type="EMBL" id="AF079846">
    <property type="protein sequence ID" value="AAD34233.1"/>
    <property type="molecule type" value="mRNA"/>
</dbReference>
<dbReference type="EMBL" id="AF155547">
    <property type="protein sequence ID" value="AAD38412.1"/>
    <property type="molecule type" value="mRNA"/>
</dbReference>
<dbReference type="EMBL" id="AK158744">
    <property type="protein sequence ID" value="BAE34638.1"/>
    <property type="molecule type" value="mRNA"/>
</dbReference>
<dbReference type="EMBL" id="AK162866">
    <property type="protein sequence ID" value="BAE37092.1"/>
    <property type="molecule type" value="mRNA"/>
</dbReference>
<dbReference type="EMBL" id="AK165294">
    <property type="protein sequence ID" value="BAE38123.1"/>
    <property type="molecule type" value="mRNA"/>
</dbReference>
<dbReference type="EMBL" id="AC154563">
    <property type="status" value="NOT_ANNOTATED_CDS"/>
    <property type="molecule type" value="Genomic_DNA"/>
</dbReference>
<dbReference type="EMBL" id="BC016897">
    <property type="protein sequence ID" value="AAH16897.1"/>
    <property type="molecule type" value="mRNA"/>
</dbReference>
<dbReference type="EMBL" id="BC037021">
    <property type="protein sequence ID" value="AAH37021.1"/>
    <property type="molecule type" value="mRNA"/>
</dbReference>
<dbReference type="CCDS" id="CCDS27259.1">
    <molecule id="Q9WV69-2"/>
</dbReference>
<dbReference type="CCDS" id="CCDS88706.1">
    <molecule id="Q9WV69-4"/>
</dbReference>
<dbReference type="CCDS" id="CCDS88707.1">
    <molecule id="Q9WV69-3"/>
</dbReference>
<dbReference type="CCDS" id="CCDS88708.1">
    <molecule id="Q9WV69-1"/>
</dbReference>
<dbReference type="RefSeq" id="NP_001239591.1">
    <molecule id="Q9WV69-1"/>
    <property type="nucleotide sequence ID" value="NM_001252662.1"/>
</dbReference>
<dbReference type="RefSeq" id="NP_001239592.1">
    <molecule id="Q9WV69-2"/>
    <property type="nucleotide sequence ID" value="NM_001252663.1"/>
</dbReference>
<dbReference type="RefSeq" id="NP_001239593.1">
    <molecule id="Q9WV69-3"/>
    <property type="nucleotide sequence ID" value="NM_001252664.1"/>
</dbReference>
<dbReference type="RefSeq" id="NP_001239594.1">
    <molecule id="Q9WV69-4"/>
    <property type="nucleotide sequence ID" value="NM_001252665.1"/>
</dbReference>
<dbReference type="RefSeq" id="NP_001239595.1">
    <molecule id="Q9WV69-4"/>
    <property type="nucleotide sequence ID" value="NM_001252666.1"/>
</dbReference>
<dbReference type="RefSeq" id="NP_001346953.1">
    <molecule id="Q9WV69-1"/>
    <property type="nucleotide sequence ID" value="NM_001360024.1"/>
</dbReference>
<dbReference type="RefSeq" id="NP_001346954.1">
    <molecule id="Q9WV69-1"/>
    <property type="nucleotide sequence ID" value="NM_001360025.1"/>
</dbReference>
<dbReference type="RefSeq" id="NP_001346955.1">
    <molecule id="Q9WV69-1"/>
    <property type="nucleotide sequence ID" value="NM_001360026.1"/>
</dbReference>
<dbReference type="RefSeq" id="NP_001346956.1">
    <molecule id="Q9WV69-2"/>
    <property type="nucleotide sequence ID" value="NM_001360027.1"/>
</dbReference>
<dbReference type="RefSeq" id="NP_001346957.1">
    <molecule id="Q9WV69-3"/>
    <property type="nucleotide sequence ID" value="NM_001360028.1"/>
</dbReference>
<dbReference type="RefSeq" id="NP_001346958.1">
    <molecule id="Q9WV69-4"/>
    <property type="nucleotide sequence ID" value="NM_001360029.1"/>
</dbReference>
<dbReference type="RefSeq" id="NP_001346959.1">
    <molecule id="Q9WV69-3"/>
    <property type="nucleotide sequence ID" value="NM_001360030.1"/>
</dbReference>
<dbReference type="RefSeq" id="NP_038542.1">
    <molecule id="Q9WV69-2"/>
    <property type="nucleotide sequence ID" value="NM_013514.4"/>
</dbReference>
<dbReference type="RefSeq" id="XP_006518593.1">
    <property type="nucleotide sequence ID" value="XM_006518530.3"/>
</dbReference>
<dbReference type="RefSeq" id="XP_006518594.1">
    <property type="nucleotide sequence ID" value="XM_006518531.2"/>
</dbReference>
<dbReference type="RefSeq" id="XP_006518595.1">
    <property type="nucleotide sequence ID" value="XM_006518532.2"/>
</dbReference>
<dbReference type="RefSeq" id="XP_006518602.1">
    <property type="nucleotide sequence ID" value="XM_006518539.2"/>
</dbReference>
<dbReference type="RefSeq" id="XP_006518603.1">
    <property type="nucleotide sequence ID" value="XM_006518540.3"/>
</dbReference>
<dbReference type="RefSeq" id="XP_006518604.1">
    <property type="nucleotide sequence ID" value="XM_006518541.2"/>
</dbReference>
<dbReference type="RefSeq" id="XP_006518605.1">
    <property type="nucleotide sequence ID" value="XM_006518542.3"/>
</dbReference>
<dbReference type="RefSeq" id="XP_017171327.1">
    <property type="nucleotide sequence ID" value="XM_017315838.1"/>
</dbReference>
<dbReference type="RefSeq" id="XP_017171328.1">
    <property type="nucleotide sequence ID" value="XM_017315839.1"/>
</dbReference>
<dbReference type="RefSeq" id="XP_017171329.1">
    <property type="nucleotide sequence ID" value="XM_017315840.1"/>
</dbReference>
<dbReference type="RefSeq" id="XP_036014339.1">
    <molecule id="Q9WV69-1"/>
    <property type="nucleotide sequence ID" value="XM_036158446.1"/>
</dbReference>
<dbReference type="RefSeq" id="XP_036014345.1">
    <molecule id="Q9WV69-3"/>
    <property type="nucleotide sequence ID" value="XM_036158452.1"/>
</dbReference>
<dbReference type="RefSeq" id="XP_036014346.1">
    <molecule id="Q9WV69-3"/>
    <property type="nucleotide sequence ID" value="XM_036158453.1"/>
</dbReference>
<dbReference type="RefSeq" id="XP_036014347.1">
    <molecule id="Q9WV69-3"/>
    <property type="nucleotide sequence ID" value="XM_036158454.1"/>
</dbReference>
<dbReference type="BMRB" id="Q9WV69"/>
<dbReference type="SMR" id="Q9WV69"/>
<dbReference type="BioGRID" id="199464">
    <property type="interactions" value="10"/>
</dbReference>
<dbReference type="FunCoup" id="Q9WV69">
    <property type="interactions" value="263"/>
</dbReference>
<dbReference type="IntAct" id="Q9WV69">
    <property type="interactions" value="1"/>
</dbReference>
<dbReference type="STRING" id="10090.ENSMUSP00000106612"/>
<dbReference type="GlyGen" id="Q9WV69">
    <property type="glycosylation" value="9 sites, 1 O-linked glycan (9 sites)"/>
</dbReference>
<dbReference type="iPTMnet" id="Q9WV69"/>
<dbReference type="PhosphoSitePlus" id="Q9WV69"/>
<dbReference type="SwissPalm" id="Q9WV69"/>
<dbReference type="jPOST" id="Q9WV69"/>
<dbReference type="PaxDb" id="10090-ENSMUSP00000106612"/>
<dbReference type="PeptideAtlas" id="Q9WV69"/>
<dbReference type="ProteomicsDB" id="277312">
    <molecule id="Q9WV69-1"/>
</dbReference>
<dbReference type="ProteomicsDB" id="277313">
    <molecule id="Q9WV69-2"/>
</dbReference>
<dbReference type="ProteomicsDB" id="277314">
    <molecule id="Q9WV69-3"/>
</dbReference>
<dbReference type="ProteomicsDB" id="277315">
    <molecule id="Q9WV69-4"/>
</dbReference>
<dbReference type="Antibodypedia" id="9250">
    <property type="antibodies" value="237 antibodies from 31 providers"/>
</dbReference>
<dbReference type="DNASU" id="13829"/>
<dbReference type="Ensembl" id="ENSMUST00000022694.17">
    <molecule id="Q9WV69-1"/>
    <property type="protein sequence ID" value="ENSMUSP00000022694.11"/>
    <property type="gene ID" value="ENSMUSG00000022099.19"/>
</dbReference>
<dbReference type="Ensembl" id="ENSMUST00000110984.4">
    <molecule id="Q9WV69-2"/>
    <property type="protein sequence ID" value="ENSMUSP00000106612.3"/>
    <property type="gene ID" value="ENSMUSG00000022099.19"/>
</dbReference>
<dbReference type="Ensembl" id="ENSMUST00000228001.2">
    <molecule id="Q9WV69-4"/>
    <property type="protein sequence ID" value="ENSMUSP00000153945.2"/>
    <property type="gene ID" value="ENSMUSG00000022099.19"/>
</dbReference>
<dbReference type="Ensembl" id="ENSMUST00000228009.2">
    <molecule id="Q9WV69-2"/>
    <property type="protein sequence ID" value="ENSMUSP00000153828.2"/>
    <property type="gene ID" value="ENSMUSG00000022099.19"/>
</dbReference>
<dbReference type="Ensembl" id="ENSMUST00000228295.2">
    <molecule id="Q9WV69-3"/>
    <property type="protein sequence ID" value="ENSMUSP00000154373.2"/>
    <property type="gene ID" value="ENSMUSG00000022099.19"/>
</dbReference>
<dbReference type="Ensembl" id="ENSMUST00000228824.2">
    <molecule id="Q9WV69-4"/>
    <property type="protein sequence ID" value="ENSMUSP00000154045.2"/>
    <property type="gene ID" value="ENSMUSG00000022099.19"/>
</dbReference>
<dbReference type="GeneID" id="13829"/>
<dbReference type="KEGG" id="mmu:13829"/>
<dbReference type="UCSC" id="uc007uom.2">
    <molecule id="Q9WV69-1"/>
    <property type="organism name" value="mouse"/>
</dbReference>
<dbReference type="UCSC" id="uc029sln.1">
    <molecule id="Q9WV69-4"/>
    <property type="organism name" value="mouse"/>
</dbReference>
<dbReference type="UCSC" id="uc029slq.1">
    <molecule id="Q9WV69-3"/>
    <property type="organism name" value="mouse"/>
</dbReference>
<dbReference type="UCSC" id="uc033grx.1">
    <molecule id="Q9WV69-2"/>
    <property type="organism name" value="mouse"/>
</dbReference>
<dbReference type="AGR" id="MGI:99670"/>
<dbReference type="CTD" id="2039"/>
<dbReference type="MGI" id="MGI:99670">
    <property type="gene designation" value="Dmtn"/>
</dbReference>
<dbReference type="VEuPathDB" id="HostDB:ENSMUSG00000022099"/>
<dbReference type="eggNOG" id="KOG1044">
    <property type="taxonomic scope" value="Eukaryota"/>
</dbReference>
<dbReference type="GeneTree" id="ENSGT00950000182850"/>
<dbReference type="HOGENOM" id="CLU_001357_12_1_1"/>
<dbReference type="InParanoid" id="Q9WV69"/>
<dbReference type="OMA" id="MLEHKIY"/>
<dbReference type="OrthoDB" id="1746725at2759"/>
<dbReference type="PhylomeDB" id="Q9WV69"/>
<dbReference type="TreeFam" id="TF318042"/>
<dbReference type="Reactome" id="R-MMU-5223345">
    <property type="pathway name" value="Miscellaneous transport and binding events"/>
</dbReference>
<dbReference type="BioGRID-ORCS" id="13829">
    <property type="hits" value="3 hits in 77 CRISPR screens"/>
</dbReference>
<dbReference type="CD-CODE" id="CE726F99">
    <property type="entry name" value="Postsynaptic density"/>
</dbReference>
<dbReference type="ChiTaRS" id="Dmtn">
    <property type="organism name" value="mouse"/>
</dbReference>
<dbReference type="PRO" id="PR:Q9WV69"/>
<dbReference type="Proteomes" id="UP000000589">
    <property type="component" value="Chromosome 14"/>
</dbReference>
<dbReference type="RNAct" id="Q9WV69">
    <property type="molecule type" value="protein"/>
</dbReference>
<dbReference type="Bgee" id="ENSMUSG00000022099">
    <property type="expression patterns" value="Expressed in primary visual cortex and 204 other cell types or tissues"/>
</dbReference>
<dbReference type="ExpressionAtlas" id="Q9WV69">
    <property type="expression patterns" value="baseline and differential"/>
</dbReference>
<dbReference type="GO" id="GO:0005884">
    <property type="term" value="C:actin filament"/>
    <property type="evidence" value="ECO:0000250"/>
    <property type="project" value="UniProtKB"/>
</dbReference>
<dbReference type="GO" id="GO:0031253">
    <property type="term" value="C:cell projection membrane"/>
    <property type="evidence" value="ECO:0000314"/>
    <property type="project" value="UniProtKB"/>
</dbReference>
<dbReference type="GO" id="GO:0030863">
    <property type="term" value="C:cortical cytoskeleton"/>
    <property type="evidence" value="ECO:0000314"/>
    <property type="project" value="MGI"/>
</dbReference>
<dbReference type="GO" id="GO:0031410">
    <property type="term" value="C:cytoplasmic vesicle"/>
    <property type="evidence" value="ECO:0000250"/>
    <property type="project" value="UniProtKB"/>
</dbReference>
<dbReference type="GO" id="GO:0005829">
    <property type="term" value="C:cytosol"/>
    <property type="evidence" value="ECO:0000314"/>
    <property type="project" value="UniProtKB"/>
</dbReference>
<dbReference type="GO" id="GO:0016020">
    <property type="term" value="C:membrane"/>
    <property type="evidence" value="ECO:0000314"/>
    <property type="project" value="MGI"/>
</dbReference>
<dbReference type="GO" id="GO:0048471">
    <property type="term" value="C:perinuclear region of cytoplasm"/>
    <property type="evidence" value="ECO:0000314"/>
    <property type="project" value="UniProtKB"/>
</dbReference>
<dbReference type="GO" id="GO:0005886">
    <property type="term" value="C:plasma membrane"/>
    <property type="evidence" value="ECO:0000250"/>
    <property type="project" value="UniProtKB"/>
</dbReference>
<dbReference type="GO" id="GO:0031095">
    <property type="term" value="C:platelet dense tubular network membrane"/>
    <property type="evidence" value="ECO:0000250"/>
    <property type="project" value="UniProtKB"/>
</dbReference>
<dbReference type="GO" id="GO:0014069">
    <property type="term" value="C:postsynaptic density"/>
    <property type="evidence" value="ECO:0000314"/>
    <property type="project" value="MGI"/>
</dbReference>
<dbReference type="GO" id="GO:0005790">
    <property type="term" value="C:smooth endoplasmic reticulum"/>
    <property type="evidence" value="ECO:0007669"/>
    <property type="project" value="GOC"/>
</dbReference>
<dbReference type="GO" id="GO:0014731">
    <property type="term" value="C:spectrin-associated cytoskeleton"/>
    <property type="evidence" value="ECO:0000250"/>
    <property type="project" value="UniProtKB"/>
</dbReference>
<dbReference type="GO" id="GO:0045202">
    <property type="term" value="C:synapse"/>
    <property type="evidence" value="ECO:0000314"/>
    <property type="project" value="SynGO"/>
</dbReference>
<dbReference type="GO" id="GO:0003779">
    <property type="term" value="F:actin binding"/>
    <property type="evidence" value="ECO:0000250"/>
    <property type="project" value="UniProtKB"/>
</dbReference>
<dbReference type="GO" id="GO:0005102">
    <property type="term" value="F:signaling receptor binding"/>
    <property type="evidence" value="ECO:0000250"/>
    <property type="project" value="UniProtKB"/>
</dbReference>
<dbReference type="GO" id="GO:0030507">
    <property type="term" value="F:spectrin binding"/>
    <property type="evidence" value="ECO:0000250"/>
    <property type="project" value="UniProtKB"/>
</dbReference>
<dbReference type="GO" id="GO:0030036">
    <property type="term" value="P:actin cytoskeleton organization"/>
    <property type="evidence" value="ECO:0000315"/>
    <property type="project" value="UniProtKB"/>
</dbReference>
<dbReference type="GO" id="GO:0051017">
    <property type="term" value="P:actin filament bundle assembly"/>
    <property type="evidence" value="ECO:0000250"/>
    <property type="project" value="UniProtKB"/>
</dbReference>
<dbReference type="GO" id="GO:0051693">
    <property type="term" value="P:actin filament capping"/>
    <property type="evidence" value="ECO:0007669"/>
    <property type="project" value="UniProtKB-KW"/>
</dbReference>
<dbReference type="GO" id="GO:0071320">
    <property type="term" value="P:cellular response to cAMP"/>
    <property type="evidence" value="ECO:0000250"/>
    <property type="project" value="UniProtKB"/>
</dbReference>
<dbReference type="GO" id="GO:0071786">
    <property type="term" value="P:endoplasmic reticulum tubular network organization"/>
    <property type="evidence" value="ECO:0000315"/>
    <property type="project" value="UniProtKB"/>
</dbReference>
<dbReference type="GO" id="GO:0048821">
    <property type="term" value="P:erythrocyte development"/>
    <property type="evidence" value="ECO:0000315"/>
    <property type="project" value="UniProtKB"/>
</dbReference>
<dbReference type="GO" id="GO:0010812">
    <property type="term" value="P:negative regulation of cell-substrate adhesion"/>
    <property type="evidence" value="ECO:0000315"/>
    <property type="project" value="UniProtKB"/>
</dbReference>
<dbReference type="GO" id="GO:0051895">
    <property type="term" value="P:negative regulation of focal adhesion assembly"/>
    <property type="evidence" value="ECO:0000315"/>
    <property type="project" value="UniProtKB"/>
</dbReference>
<dbReference type="GO" id="GO:0033137">
    <property type="term" value="P:negative regulation of peptidyl-serine phosphorylation"/>
    <property type="evidence" value="ECO:0000315"/>
    <property type="project" value="UniProtKB"/>
</dbReference>
<dbReference type="GO" id="GO:0010801">
    <property type="term" value="P:negative regulation of peptidyl-threonine phosphorylation"/>
    <property type="evidence" value="ECO:0000315"/>
    <property type="project" value="UniProtKB"/>
</dbReference>
<dbReference type="GO" id="GO:0050732">
    <property type="term" value="P:negative regulation of peptidyl-tyrosine phosphorylation"/>
    <property type="evidence" value="ECO:0000315"/>
    <property type="project" value="UniProtKB"/>
</dbReference>
<dbReference type="GO" id="GO:0090315">
    <property type="term" value="P:negative regulation of protein targeting to membrane"/>
    <property type="evidence" value="ECO:0000315"/>
    <property type="project" value="UniProtKB"/>
</dbReference>
<dbReference type="GO" id="GO:1900025">
    <property type="term" value="P:negative regulation of substrate adhesion-dependent cell spreading"/>
    <property type="evidence" value="ECO:0000315"/>
    <property type="project" value="UniProtKB"/>
</dbReference>
<dbReference type="GO" id="GO:0010763">
    <property type="term" value="P:positive regulation of fibroblast migration"/>
    <property type="evidence" value="ECO:0000314"/>
    <property type="project" value="UniProtKB"/>
</dbReference>
<dbReference type="GO" id="GO:0090303">
    <property type="term" value="P:positive regulation of wound healing"/>
    <property type="evidence" value="ECO:0000315"/>
    <property type="project" value="UniProtKB"/>
</dbReference>
<dbReference type="GO" id="GO:0065003">
    <property type="term" value="P:protein-containing complex assembly"/>
    <property type="evidence" value="ECO:0000314"/>
    <property type="project" value="UniProtKB"/>
</dbReference>
<dbReference type="GO" id="GO:0032956">
    <property type="term" value="P:regulation of actin cytoskeleton organization"/>
    <property type="evidence" value="ECO:0000250"/>
    <property type="project" value="UniProtKB"/>
</dbReference>
<dbReference type="GO" id="GO:0008360">
    <property type="term" value="P:regulation of cell shape"/>
    <property type="evidence" value="ECO:0000314"/>
    <property type="project" value="UniProtKB"/>
</dbReference>
<dbReference type="GO" id="GO:0051489">
    <property type="term" value="P:regulation of filopodium assembly"/>
    <property type="evidence" value="ECO:0000250"/>
    <property type="project" value="UniProtKB"/>
</dbReference>
<dbReference type="GO" id="GO:0010591">
    <property type="term" value="P:regulation of lamellipodium assembly"/>
    <property type="evidence" value="ECO:0000250"/>
    <property type="project" value="UniProtKB"/>
</dbReference>
<dbReference type="GO" id="GO:0051563">
    <property type="term" value="P:smooth endoplasmic reticulum calcium ion homeostasis"/>
    <property type="evidence" value="ECO:0000315"/>
    <property type="project" value="UniProtKB"/>
</dbReference>
<dbReference type="FunFam" id="1.10.950.10:FF:000002">
    <property type="entry name" value="Dematin isoform X2"/>
    <property type="match status" value="1"/>
</dbReference>
<dbReference type="Gene3D" id="1.10.950.10">
    <property type="entry name" value="Villin headpiece domain"/>
    <property type="match status" value="1"/>
</dbReference>
<dbReference type="InterPro" id="IPR032402">
    <property type="entry name" value="AbLIM_anchor"/>
</dbReference>
<dbReference type="InterPro" id="IPR051618">
    <property type="entry name" value="Actin-binding_LIM"/>
</dbReference>
<dbReference type="InterPro" id="IPR003128">
    <property type="entry name" value="Villin_headpiece"/>
</dbReference>
<dbReference type="InterPro" id="IPR036886">
    <property type="entry name" value="Villin_headpiece_dom_sf"/>
</dbReference>
<dbReference type="PANTHER" id="PTHR24213">
    <property type="entry name" value="ACTIN-BINDING LIM PROTEIN"/>
    <property type="match status" value="1"/>
</dbReference>
<dbReference type="PANTHER" id="PTHR24213:SF17">
    <property type="entry name" value="DEMATIN"/>
    <property type="match status" value="1"/>
</dbReference>
<dbReference type="Pfam" id="PF16182">
    <property type="entry name" value="AbLIM_anchor"/>
    <property type="match status" value="2"/>
</dbReference>
<dbReference type="Pfam" id="PF02209">
    <property type="entry name" value="VHP"/>
    <property type="match status" value="1"/>
</dbReference>
<dbReference type="SMART" id="SM00153">
    <property type="entry name" value="VHP"/>
    <property type="match status" value="1"/>
</dbReference>
<dbReference type="SUPFAM" id="SSF47050">
    <property type="entry name" value="VHP, Villin headpiece domain"/>
    <property type="match status" value="1"/>
</dbReference>
<dbReference type="PROSITE" id="PS51089">
    <property type="entry name" value="HP"/>
    <property type="match status" value="1"/>
</dbReference>
<evidence type="ECO:0000250" key="1"/>
<evidence type="ECO:0000250" key="2">
    <source>
        <dbReference type="UniProtKB" id="Q08495"/>
    </source>
</evidence>
<evidence type="ECO:0000255" key="3">
    <source>
        <dbReference type="PROSITE-ProRule" id="PRU00595"/>
    </source>
</evidence>
<evidence type="ECO:0000256" key="4">
    <source>
        <dbReference type="SAM" id="MobiDB-lite"/>
    </source>
</evidence>
<evidence type="ECO:0000269" key="5">
    <source>
    </source>
</evidence>
<evidence type="ECO:0000269" key="6">
    <source>
    </source>
</evidence>
<evidence type="ECO:0000269" key="7">
    <source>
    </source>
</evidence>
<evidence type="ECO:0000269" key="8">
    <source>
    </source>
</evidence>
<evidence type="ECO:0000303" key="9">
    <source>
    </source>
</evidence>
<evidence type="ECO:0000303" key="10">
    <source>
    </source>
</evidence>
<evidence type="ECO:0000303" key="11">
    <source>
    </source>
</evidence>
<evidence type="ECO:0000305" key="12"/>
<evidence type="ECO:0007744" key="13">
    <source>
    </source>
</evidence>
<evidence type="ECO:0007744" key="14">
    <source>
    </source>
</evidence>
<evidence type="ECO:0007744" key="15">
    <source>
    </source>
</evidence>
<protein>
    <recommendedName>
        <fullName>Dematin</fullName>
    </recommendedName>
    <alternativeName>
        <fullName>Dematin actin-binding protein</fullName>
    </alternativeName>
    <alternativeName>
        <fullName>Erythrocyte membrane protein band 4.9</fullName>
    </alternativeName>
</protein>
<feature type="chain" id="PRO_0000218756" description="Dematin">
    <location>
        <begin position="1"/>
        <end position="405"/>
    </location>
</feature>
<feature type="domain" description="HP" evidence="3">
    <location>
        <begin position="337"/>
        <end position="405"/>
    </location>
</feature>
<feature type="region of interest" description="Disordered" evidence="4">
    <location>
        <begin position="1"/>
        <end position="29"/>
    </location>
</feature>
<feature type="region of interest" description="Disordered" evidence="4">
    <location>
        <begin position="81"/>
        <end position="100"/>
    </location>
</feature>
<feature type="region of interest" description="Disordered" evidence="4">
    <location>
        <begin position="108"/>
        <end position="332"/>
    </location>
</feature>
<feature type="region of interest" description="Interaction with RASGRF2" evidence="1">
    <location>
        <begin position="224"/>
        <end position="308"/>
    </location>
</feature>
<feature type="compositionally biased region" description="Low complexity" evidence="4">
    <location>
        <begin position="11"/>
        <end position="29"/>
    </location>
</feature>
<feature type="compositionally biased region" description="Low complexity" evidence="4">
    <location>
        <begin position="113"/>
        <end position="124"/>
    </location>
</feature>
<feature type="compositionally biased region" description="Acidic residues" evidence="4">
    <location>
        <begin position="216"/>
        <end position="228"/>
    </location>
</feature>
<feature type="compositionally biased region" description="Basic and acidic residues" evidence="4">
    <location>
        <begin position="229"/>
        <end position="242"/>
    </location>
</feature>
<feature type="compositionally biased region" description="Basic and acidic residues" evidence="4">
    <location>
        <begin position="252"/>
        <end position="261"/>
    </location>
</feature>
<feature type="compositionally biased region" description="Low complexity" evidence="4">
    <location>
        <begin position="277"/>
        <end position="292"/>
    </location>
</feature>
<feature type="compositionally biased region" description="Polar residues" evidence="4">
    <location>
        <begin position="294"/>
        <end position="322"/>
    </location>
</feature>
<feature type="modified residue" description="Phosphoserine" evidence="2">
    <location>
        <position position="16"/>
    </location>
</feature>
<feature type="modified residue" description="Phosphoserine" evidence="2">
    <location>
        <position position="18"/>
    </location>
</feature>
<feature type="modified residue" description="Phosphoserine" evidence="2">
    <location>
        <position position="26"/>
    </location>
</feature>
<feature type="modified residue" description="Phosphoserine" evidence="15">
    <location>
        <position position="92"/>
    </location>
</feature>
<feature type="modified residue" description="Phosphoserine" evidence="15">
    <location>
        <position position="96"/>
    </location>
</feature>
<feature type="modified residue" description="Phosphoserine" evidence="15">
    <location>
        <position position="110"/>
    </location>
</feature>
<feature type="modified residue" description="Phosphoserine" evidence="15">
    <location>
        <position position="113"/>
    </location>
</feature>
<feature type="modified residue" description="Phosphothreonine" evidence="14 15">
    <location>
        <position position="114"/>
    </location>
</feature>
<feature type="modified residue" description="Phosphoserine" evidence="13">
    <location>
        <position position="156"/>
    </location>
</feature>
<feature type="modified residue" description="Phosphoserine" evidence="13 14 15">
    <location>
        <position position="226"/>
    </location>
</feature>
<feature type="modified residue" description="Phosphoserine" evidence="2">
    <location>
        <position position="269"/>
    </location>
</feature>
<feature type="modified residue" description="Phosphoserine" evidence="2">
    <location>
        <position position="279"/>
    </location>
</feature>
<feature type="modified residue" description="Phosphoserine" evidence="2">
    <location>
        <position position="289"/>
    </location>
</feature>
<feature type="modified residue" description="Phosphoserine" evidence="2">
    <location>
        <position position="303"/>
    </location>
</feature>
<feature type="modified residue" description="Phosphoserine" evidence="15">
    <location>
        <position position="315"/>
    </location>
</feature>
<feature type="modified residue" description="Phosphoserine" evidence="15">
    <location>
        <position position="333"/>
    </location>
</feature>
<feature type="modified residue" description="Phosphoserine" evidence="13">
    <location>
        <position position="372"/>
    </location>
</feature>
<feature type="modified residue" description="Phosphoserine" evidence="15">
    <location>
        <position position="383"/>
    </location>
</feature>
<feature type="modified residue" description="Phosphoserine; by PKA" evidence="2">
    <location>
        <position position="403"/>
    </location>
</feature>
<feature type="splice variant" id="VSP_047491" description="In isoform 3 and isoform 4." evidence="10 11">
    <location>
        <begin position="7"/>
        <end position="31"/>
    </location>
</feature>
<feature type="splice variant" id="VSP_047492" description="In isoform 2 and isoform 4." evidence="9 10 11">
    <location>
        <begin position="320"/>
        <end position="341"/>
    </location>
</feature>
<organism>
    <name type="scientific">Mus musculus</name>
    <name type="common">Mouse</name>
    <dbReference type="NCBI Taxonomy" id="10090"/>
    <lineage>
        <taxon>Eukaryota</taxon>
        <taxon>Metazoa</taxon>
        <taxon>Chordata</taxon>
        <taxon>Craniata</taxon>
        <taxon>Vertebrata</taxon>
        <taxon>Euteleostomi</taxon>
        <taxon>Mammalia</taxon>
        <taxon>Eutheria</taxon>
        <taxon>Euarchontoglires</taxon>
        <taxon>Glires</taxon>
        <taxon>Rodentia</taxon>
        <taxon>Myomorpha</taxon>
        <taxon>Muroidea</taxon>
        <taxon>Muridae</taxon>
        <taxon>Murinae</taxon>
        <taxon>Mus</taxon>
        <taxon>Mus</taxon>
    </lineage>
</organism>
<keyword id="KW-0117">Actin capping</keyword>
<keyword id="KW-0009">Actin-binding</keyword>
<keyword id="KW-0025">Alternative splicing</keyword>
<keyword id="KW-1003">Cell membrane</keyword>
<keyword id="KW-0966">Cell projection</keyword>
<keyword id="KW-0963">Cytoplasm</keyword>
<keyword id="KW-0206">Cytoskeleton</keyword>
<keyword id="KW-1015">Disulfide bond</keyword>
<keyword id="KW-0472">Membrane</keyword>
<keyword id="KW-0597">Phosphoprotein</keyword>
<keyword id="KW-1185">Reference proteome</keyword>
<keyword id="KW-0677">Repeat</keyword>
<keyword id="KW-0043">Tumor suppressor</keyword>
<name>DEMA_MOUSE</name>
<reference key="1">
    <citation type="journal article" date="1999" name="Mamm. Genome">
        <title>cDNA sequence, genomic structure, and expression of the mouse dematin gene (Epb4.9).</title>
        <authorList>
            <person name="Azim A.C."/>
            <person name="Kim A.C."/>
            <person name="Lutchman M."/>
            <person name="Andrabi S."/>
            <person name="Peters L.L."/>
            <person name="Chishti A.H."/>
        </authorList>
    </citation>
    <scope>NUCLEOTIDE SEQUENCE [MRNA] (ISOFORMS 1 AND 2)</scope>
    <source>
        <tissue>Erythrocyte</tissue>
        <tissue>Spleen</tissue>
    </source>
</reference>
<reference key="2">
    <citation type="journal article" date="2005" name="Science">
        <title>The transcriptional landscape of the mammalian genome.</title>
        <authorList>
            <person name="Carninci P."/>
            <person name="Kasukawa T."/>
            <person name="Katayama S."/>
            <person name="Gough J."/>
            <person name="Frith M.C."/>
            <person name="Maeda N."/>
            <person name="Oyama R."/>
            <person name="Ravasi T."/>
            <person name="Lenhard B."/>
            <person name="Wells C."/>
            <person name="Kodzius R."/>
            <person name="Shimokawa K."/>
            <person name="Bajic V.B."/>
            <person name="Brenner S.E."/>
            <person name="Batalov S."/>
            <person name="Forrest A.R."/>
            <person name="Zavolan M."/>
            <person name="Davis M.J."/>
            <person name="Wilming L.G."/>
            <person name="Aidinis V."/>
            <person name="Allen J.E."/>
            <person name="Ambesi-Impiombato A."/>
            <person name="Apweiler R."/>
            <person name="Aturaliya R.N."/>
            <person name="Bailey T.L."/>
            <person name="Bansal M."/>
            <person name="Baxter L."/>
            <person name="Beisel K.W."/>
            <person name="Bersano T."/>
            <person name="Bono H."/>
            <person name="Chalk A.M."/>
            <person name="Chiu K.P."/>
            <person name="Choudhary V."/>
            <person name="Christoffels A."/>
            <person name="Clutterbuck D.R."/>
            <person name="Crowe M.L."/>
            <person name="Dalla E."/>
            <person name="Dalrymple B.P."/>
            <person name="de Bono B."/>
            <person name="Della Gatta G."/>
            <person name="di Bernardo D."/>
            <person name="Down T."/>
            <person name="Engstrom P."/>
            <person name="Fagiolini M."/>
            <person name="Faulkner G."/>
            <person name="Fletcher C.F."/>
            <person name="Fukushima T."/>
            <person name="Furuno M."/>
            <person name="Futaki S."/>
            <person name="Gariboldi M."/>
            <person name="Georgii-Hemming P."/>
            <person name="Gingeras T.R."/>
            <person name="Gojobori T."/>
            <person name="Green R.E."/>
            <person name="Gustincich S."/>
            <person name="Harbers M."/>
            <person name="Hayashi Y."/>
            <person name="Hensch T.K."/>
            <person name="Hirokawa N."/>
            <person name="Hill D."/>
            <person name="Huminiecki L."/>
            <person name="Iacono M."/>
            <person name="Ikeo K."/>
            <person name="Iwama A."/>
            <person name="Ishikawa T."/>
            <person name="Jakt M."/>
            <person name="Kanapin A."/>
            <person name="Katoh M."/>
            <person name="Kawasawa Y."/>
            <person name="Kelso J."/>
            <person name="Kitamura H."/>
            <person name="Kitano H."/>
            <person name="Kollias G."/>
            <person name="Krishnan S.P."/>
            <person name="Kruger A."/>
            <person name="Kummerfeld S.K."/>
            <person name="Kurochkin I.V."/>
            <person name="Lareau L.F."/>
            <person name="Lazarevic D."/>
            <person name="Lipovich L."/>
            <person name="Liu J."/>
            <person name="Liuni S."/>
            <person name="McWilliam S."/>
            <person name="Madan Babu M."/>
            <person name="Madera M."/>
            <person name="Marchionni L."/>
            <person name="Matsuda H."/>
            <person name="Matsuzawa S."/>
            <person name="Miki H."/>
            <person name="Mignone F."/>
            <person name="Miyake S."/>
            <person name="Morris K."/>
            <person name="Mottagui-Tabar S."/>
            <person name="Mulder N."/>
            <person name="Nakano N."/>
            <person name="Nakauchi H."/>
            <person name="Ng P."/>
            <person name="Nilsson R."/>
            <person name="Nishiguchi S."/>
            <person name="Nishikawa S."/>
            <person name="Nori F."/>
            <person name="Ohara O."/>
            <person name="Okazaki Y."/>
            <person name="Orlando V."/>
            <person name="Pang K.C."/>
            <person name="Pavan W.J."/>
            <person name="Pavesi G."/>
            <person name="Pesole G."/>
            <person name="Petrovsky N."/>
            <person name="Piazza S."/>
            <person name="Reed J."/>
            <person name="Reid J.F."/>
            <person name="Ring B.Z."/>
            <person name="Ringwald M."/>
            <person name="Rost B."/>
            <person name="Ruan Y."/>
            <person name="Salzberg S.L."/>
            <person name="Sandelin A."/>
            <person name="Schneider C."/>
            <person name="Schoenbach C."/>
            <person name="Sekiguchi K."/>
            <person name="Semple C.A."/>
            <person name="Seno S."/>
            <person name="Sessa L."/>
            <person name="Sheng Y."/>
            <person name="Shibata Y."/>
            <person name="Shimada H."/>
            <person name="Shimada K."/>
            <person name="Silva D."/>
            <person name="Sinclair B."/>
            <person name="Sperling S."/>
            <person name="Stupka E."/>
            <person name="Sugiura K."/>
            <person name="Sultana R."/>
            <person name="Takenaka Y."/>
            <person name="Taki K."/>
            <person name="Tammoja K."/>
            <person name="Tan S.L."/>
            <person name="Tang S."/>
            <person name="Taylor M.S."/>
            <person name="Tegner J."/>
            <person name="Teichmann S.A."/>
            <person name="Ueda H.R."/>
            <person name="van Nimwegen E."/>
            <person name="Verardo R."/>
            <person name="Wei C.L."/>
            <person name="Yagi K."/>
            <person name="Yamanishi H."/>
            <person name="Zabarovsky E."/>
            <person name="Zhu S."/>
            <person name="Zimmer A."/>
            <person name="Hide W."/>
            <person name="Bult C."/>
            <person name="Grimmond S.M."/>
            <person name="Teasdale R.D."/>
            <person name="Liu E.T."/>
            <person name="Brusic V."/>
            <person name="Quackenbush J."/>
            <person name="Wahlestedt C."/>
            <person name="Mattick J.S."/>
            <person name="Hume D.A."/>
            <person name="Kai C."/>
            <person name="Sasaki D."/>
            <person name="Tomaru Y."/>
            <person name="Fukuda S."/>
            <person name="Kanamori-Katayama M."/>
            <person name="Suzuki M."/>
            <person name="Aoki J."/>
            <person name="Arakawa T."/>
            <person name="Iida J."/>
            <person name="Imamura K."/>
            <person name="Itoh M."/>
            <person name="Kato T."/>
            <person name="Kawaji H."/>
            <person name="Kawagashira N."/>
            <person name="Kawashima T."/>
            <person name="Kojima M."/>
            <person name="Kondo S."/>
            <person name="Konno H."/>
            <person name="Nakano K."/>
            <person name="Ninomiya N."/>
            <person name="Nishio T."/>
            <person name="Okada M."/>
            <person name="Plessy C."/>
            <person name="Shibata K."/>
            <person name="Shiraki T."/>
            <person name="Suzuki S."/>
            <person name="Tagami M."/>
            <person name="Waki K."/>
            <person name="Watahiki A."/>
            <person name="Okamura-Oho Y."/>
            <person name="Suzuki H."/>
            <person name="Kawai J."/>
            <person name="Hayashizaki Y."/>
        </authorList>
    </citation>
    <scope>NUCLEOTIDE SEQUENCE [LARGE SCALE MRNA] (ISOFORMS 2; 3 AND 4)</scope>
    <source>
        <strain>C57BL/6J</strain>
        <tissue>Hypothalamus</tissue>
        <tissue>Spleen</tissue>
        <tissue>Visual cortex</tissue>
    </source>
</reference>
<reference key="3">
    <citation type="journal article" date="2009" name="PLoS Biol.">
        <title>Lineage-specific biology revealed by a finished genome assembly of the mouse.</title>
        <authorList>
            <person name="Church D.M."/>
            <person name="Goodstadt L."/>
            <person name="Hillier L.W."/>
            <person name="Zody M.C."/>
            <person name="Goldstein S."/>
            <person name="She X."/>
            <person name="Bult C.J."/>
            <person name="Agarwala R."/>
            <person name="Cherry J.L."/>
            <person name="DiCuccio M."/>
            <person name="Hlavina W."/>
            <person name="Kapustin Y."/>
            <person name="Meric P."/>
            <person name="Maglott D."/>
            <person name="Birtle Z."/>
            <person name="Marques A.C."/>
            <person name="Graves T."/>
            <person name="Zhou S."/>
            <person name="Teague B."/>
            <person name="Potamousis K."/>
            <person name="Churas C."/>
            <person name="Place M."/>
            <person name="Herschleb J."/>
            <person name="Runnheim R."/>
            <person name="Forrest D."/>
            <person name="Amos-Landgraf J."/>
            <person name="Schwartz D.C."/>
            <person name="Cheng Z."/>
            <person name="Lindblad-Toh K."/>
            <person name="Eichler E.E."/>
            <person name="Ponting C.P."/>
        </authorList>
    </citation>
    <scope>NUCLEOTIDE SEQUENCE [LARGE SCALE GENOMIC DNA]</scope>
    <source>
        <strain>C57BL/6J</strain>
    </source>
</reference>
<reference key="4">
    <citation type="journal article" date="2004" name="Genome Res.">
        <title>The status, quality, and expansion of the NIH full-length cDNA project: the Mammalian Gene Collection (MGC).</title>
        <authorList>
            <consortium name="The MGC Project Team"/>
        </authorList>
    </citation>
    <scope>NUCLEOTIDE SEQUENCE [LARGE SCALE MRNA] (ISOFORMS 2 AND 4)</scope>
    <source>
        <strain>FVB/N</strain>
        <tissue>Eye</tissue>
        <tissue>Kidney</tissue>
    </source>
</reference>
<reference key="5">
    <citation type="journal article" date="2002" name="Eur. J. Biochem.">
        <title>Dematin interacts with the Ras-guanine nucleotide exchange factor Ras-GRF2 and modulates mitogen-activated protein kinase pathways.</title>
        <authorList>
            <person name="Lutchman M."/>
            <person name="Kim A.C."/>
            <person name="Cheng L."/>
            <person name="Whitehead I.P."/>
            <person name="Oh S.S."/>
            <person name="Hanspal M."/>
            <person name="Boukharov A.A."/>
            <person name="Hanada T."/>
            <person name="Chishti A.H."/>
        </authorList>
    </citation>
    <scope>INTERACTION WITH RASGRF2</scope>
</reference>
<reference key="6">
    <citation type="journal article" date="2002" name="Proc. Natl. Acad. Sci. U.S.A.">
        <title>Headpiece domain of dematin is required for the stability of the erythrocyte membrane.</title>
        <authorList>
            <person name="Khanna R."/>
            <person name="Chang S.H."/>
            <person name="Andrabi S."/>
            <person name="Azam M."/>
            <person name="Kim A."/>
            <person name="Rivera A."/>
            <person name="Brugnara C."/>
            <person name="Low P.S."/>
            <person name="Liu S.C."/>
            <person name="Chishti A.H."/>
        </authorList>
    </citation>
    <scope>FUNCTION</scope>
    <scope>SUBUNIT</scope>
    <scope>DISRUPTION PHENOTYPE</scope>
    <scope>TISSUE SPECIFICITY</scope>
</reference>
<reference key="7">
    <citation type="journal article" date="2004" name="Mol. Cell. Proteomics">
        <title>Phosphoproteomic analysis of the developing mouse brain.</title>
        <authorList>
            <person name="Ballif B.A."/>
            <person name="Villen J."/>
            <person name="Beausoleil S.A."/>
            <person name="Schwartz D."/>
            <person name="Gygi S.P."/>
        </authorList>
    </citation>
    <scope>IDENTIFICATION BY MASS SPECTROMETRY [LARGE SCALE ANALYSIS]</scope>
    <source>
        <tissue>Embryonic brain</tissue>
    </source>
</reference>
<reference key="8">
    <citation type="journal article" date="2006" name="Mol. Cell. Proteomics">
        <title>Comprehensive identification of phosphorylation sites in postsynaptic density preparations.</title>
        <authorList>
            <person name="Trinidad J.C."/>
            <person name="Specht C.G."/>
            <person name="Thalhammer A."/>
            <person name="Schoepfer R."/>
            <person name="Burlingame A.L."/>
        </authorList>
    </citation>
    <scope>PHOSPHORYLATION [LARGE SCALE ANALYSIS] AT SER-156; SER-226 AND SER-372</scope>
    <scope>IDENTIFICATION BY MASS SPECTROMETRY [LARGE SCALE ANALYSIS]</scope>
    <source>
        <tissue>Brain</tissue>
    </source>
</reference>
<reference key="9">
    <citation type="journal article" date="2007" name="Proc. Natl. Acad. Sci. U.S.A.">
        <title>Large-scale phosphorylation analysis of mouse liver.</title>
        <authorList>
            <person name="Villen J."/>
            <person name="Beausoleil S.A."/>
            <person name="Gerber S.A."/>
            <person name="Gygi S.P."/>
        </authorList>
    </citation>
    <scope>PHOSPHORYLATION [LARGE SCALE ANALYSIS] AT THR-114 AND SER-226</scope>
    <scope>IDENTIFICATION BY MASS SPECTROMETRY [LARGE SCALE ANALYSIS]</scope>
    <source>
        <tissue>Liver</tissue>
    </source>
</reference>
<reference key="10">
    <citation type="journal article" date="2008" name="Mol. Cell. Biol.">
        <title>The headpiece domain of dematin regulates cell shape, motility, and wound healing by modulating RhoA activation.</title>
        <authorList>
            <person name="Mohseni M."/>
            <person name="Chishti A.H."/>
        </authorList>
    </citation>
    <scope>FUNCTION</scope>
    <scope>SUBCELLULAR LOCATION</scope>
</reference>
<reference key="11">
    <citation type="journal article" date="2010" name="Cell">
        <title>A tissue-specific atlas of mouse protein phosphorylation and expression.</title>
        <authorList>
            <person name="Huttlin E.L."/>
            <person name="Jedrychowski M.P."/>
            <person name="Elias J.E."/>
            <person name="Goswami T."/>
            <person name="Rad R."/>
            <person name="Beausoleil S.A."/>
            <person name="Villen J."/>
            <person name="Haas W."/>
            <person name="Sowa M.E."/>
            <person name="Gygi S.P."/>
        </authorList>
    </citation>
    <scope>PHOSPHORYLATION [LARGE SCALE ANALYSIS] AT SER-92; SER-96; SER-110; SER-113; THR-114; SER-226; SER-315; SER-333 AND SER-383</scope>
    <scope>IDENTIFICATION BY MASS SPECTROMETRY [LARGE SCALE ANALYSIS]</scope>
    <source>
        <tissue>Brain</tissue>
        <tissue>Brown adipose tissue</tissue>
        <tissue>Heart</tissue>
        <tissue>Kidney</tissue>
        <tissue>Lung</tissue>
        <tissue>Spleen</tissue>
    </source>
</reference>
<reference key="12">
    <citation type="journal article" date="2012" name="J. Biol. Chem.">
        <title>Headpiece domain of dematin regulates calcium mobilization and signaling in platelets.</title>
        <authorList>
            <person name="Wieschhaus A.J."/>
            <person name="Le Breton G.C."/>
            <person name="Chishti A.H."/>
        </authorList>
    </citation>
    <scope>FUNCTION</scope>
    <scope>TISSUE SPECIFICITY</scope>
</reference>
<sequence length="405" mass="45468">MERLQKQPLTSPGSVSSSRDSSVPGSPSSIVAKMDNQVLGYKDLAAIPKDKAILDIERPDLMIYEPHFTYSLLEHVELPRSRECSLSPKSTSPPPSPEVWAESRTLGIISQASTPRTTGTPRTSLPHFHHPETTRPDSNIYKKPPIYKQRESVGGSPQSKHLIEDLIIESSKFPAAQPPDPNQPAKIETDYWPCPPSLAVVETEWRKRKASRKGAEEEEEEEDDDSEEEIKAIRERQKEELSKVTSNLGKMILKEEMEKSLPIRRKTRSLPDRTPFHTSLHSGTSKSSSLPSYGRTTLSRLQSTEFSPSGSEAGSPGLQNGEGQRGRMDRGNSLPCVLEQKIYPYEMLVVTNKGRTKLPPGVDRMRLERHLSAEDFSRVFAMSPEEFGKLALWKRNELKKKASLF</sequence>
<proteinExistence type="evidence at protein level"/>
<accession>Q9WV69</accession>
<accession>F8WIF9</accession>
<accession>Q3TYC5</accession>
<accession>Q8JZV5</accession>
<accession>Q9WVM2</accession>
<comment type="function">
    <text evidence="6 7 8">Membrane-cytoskeleton-associated protein with F-actin-binding activity that induces F-actin bundles formation and stabilization. Its F-actin-bundling activity is reversibly regulated upon its phosphorylation by the cAMP-dependent protein kinase A (PKA). Binds to the erythrocyte membrane glucose transporter-1 SLC2A1/GLUT1, and hence stabilizes and attaches the spectrin-actin network to the erythrocytic plasma membrane. Plays a role in maintaining the functional integrity of PKA-activated erythrocyte shape and the membrane mechanical properties. Also plays a role as a modulator of actin dynamics in fibroblasts; acts as a negative regulator of the RhoA activation pathway. In platelets, functions as a regulator of internal calcium mobilization across the dense tubular system that affects platelet granule secretion pathways and aggregation. Also required for the formation of a diverse set of cell protrusions, such as filopodia and lamellipodia, necessary for platelet cell spreading, motility and migration. Acts as a tumor suppressor and inhibits malignant cell transformation.</text>
</comment>
<comment type="subunit">
    <text evidence="1 5 6 12">Monomeric (isoform 2); under reducing conditions. Self-associates. Exists under oxidizing condition as a trimer of two isoforms 2 and isoform 1 linked by disulfide bonds (Probable). Found in a complex with DMTN, F-actin and spectrin. Found in a complex with ADD2, DMTN and SLC2A1. Interacts with F-actin, ITPKB and spectrin. Isoform 2 interacts with SLC2A1 (via C-terminus cytoplasmic region) (By similarity). Interacts with RASGRF2.</text>
</comment>
<comment type="subcellular location">
    <subcellularLocation>
        <location evidence="1">Cytoplasm</location>
    </subcellularLocation>
    <subcellularLocation>
        <location evidence="7">Cytoplasm</location>
        <location evidence="7">Cytosol</location>
    </subcellularLocation>
    <subcellularLocation>
        <location evidence="7">Cytoplasm</location>
        <location evidence="7">Perinuclear region</location>
    </subcellularLocation>
    <subcellularLocation>
        <location evidence="1">Cytoplasm</location>
        <location evidence="1">Cytoskeleton</location>
    </subcellularLocation>
    <subcellularLocation>
        <location evidence="1">Cell membrane</location>
    </subcellularLocation>
    <subcellularLocation>
        <location evidence="7">Membrane</location>
    </subcellularLocation>
    <subcellularLocation>
        <location evidence="1">Endomembrane system</location>
    </subcellularLocation>
    <subcellularLocation>
        <location evidence="7">Cell projection</location>
    </subcellularLocation>
    <text evidence="1">Localized at the spectrin-actin junction of erythrocyte plasma membrane. Localized to intracellular membranes and the cytoskeletal network. Localized at intracellular membrane-bounded organelle compartment in platelets that likely represent the dense tubular network membrane (By similarity).</text>
</comment>
<comment type="alternative products">
    <event type="alternative splicing"/>
    <isoform>
        <id>Q9WV69-1</id>
        <name>1</name>
        <sequence type="displayed"/>
    </isoform>
    <isoform>
        <id>Q9WV69-2</id>
        <name>2</name>
        <sequence type="described" ref="VSP_047492"/>
    </isoform>
    <isoform>
        <id>Q9WV69-3</id>
        <name>3</name>
        <sequence type="described" ref="VSP_047491"/>
    </isoform>
    <isoform>
        <id>Q9WV69-4</id>
        <name>4</name>
        <sequence type="described" ref="VSP_047491 VSP_047492"/>
    </isoform>
</comment>
<comment type="tissue specificity">
    <text evidence="6 8">Expressed in platelets. Isoform 1 and isoform 2 are expressed in mature erythrocytes (at protein level).</text>
</comment>
<comment type="domain">
    <text>Both the N-terminal core domain and the C-terminal headpiece domain are sufficient for binding to F-actin and necessary for actin bundling activity.</text>
</comment>
<comment type="PTM">
    <text evidence="1">Phosphorylated. Phosphorylation at Ser-403 by PKA causes the C-terminal headpiece domain to associate with the N-terminal core domain, and leads to the inhibition of its actin bundling activity (By similarity).</text>
</comment>
<comment type="disruption phenotype">
    <text evidence="6">Mice are viable and born at the expected Mendelian ratio. Adult mice show compensated anemia and display mild microcytosis and spherocytosis. The erythrocyte plasma membrane association with the spectrin-actin skeleton is fragile and mechanically unstable.</text>
</comment>
<comment type="similarity">
    <text evidence="12">Belongs to the villin/gelsolin family.</text>
</comment>